<proteinExistence type="evidence at protein level"/>
<dbReference type="EMBL" id="AK077500">
    <property type="protein sequence ID" value="BAC36832.1"/>
    <property type="status" value="ALT_INIT"/>
    <property type="molecule type" value="mRNA"/>
</dbReference>
<dbReference type="EMBL" id="BC046960">
    <property type="protein sequence ID" value="AAH46960.1"/>
    <property type="molecule type" value="mRNA"/>
</dbReference>
<dbReference type="CCDS" id="CCDS26097.1"/>
<dbReference type="RefSeq" id="NP_849245.2">
    <property type="nucleotide sequence ID" value="NM_178914.4"/>
</dbReference>
<dbReference type="RefSeq" id="XP_011242281.1">
    <property type="nucleotide sequence ID" value="XM_011243979.2"/>
</dbReference>
<dbReference type="SMR" id="Q80VP2"/>
<dbReference type="BioGRID" id="222721">
    <property type="interactions" value="6"/>
</dbReference>
<dbReference type="FunCoup" id="Q80VP2">
    <property type="interactions" value="473"/>
</dbReference>
<dbReference type="IntAct" id="Q80VP2">
    <property type="interactions" value="33"/>
</dbReference>
<dbReference type="STRING" id="10090.ENSMUSP00000045827"/>
<dbReference type="GlyGen" id="Q80VP2">
    <property type="glycosylation" value="1 site"/>
</dbReference>
<dbReference type="iPTMnet" id="Q80VP2"/>
<dbReference type="PhosphoSitePlus" id="Q80VP2"/>
<dbReference type="PaxDb" id="10090-ENSMUSP00000045827"/>
<dbReference type="ProteomicsDB" id="257550"/>
<dbReference type="Antibodypedia" id="26287">
    <property type="antibodies" value="142 antibodies from 26 providers"/>
</dbReference>
<dbReference type="DNASU" id="104871"/>
<dbReference type="Ensembl" id="ENSMUST00000048402.12">
    <property type="protein sequence ID" value="ENSMUSP00000045827.6"/>
    <property type="gene ID" value="ENSMUSG00000021007.15"/>
</dbReference>
<dbReference type="GeneID" id="104871"/>
<dbReference type="KEGG" id="mmu:104871"/>
<dbReference type="UCSC" id="uc007ora.2">
    <property type="organism name" value="mouse"/>
</dbReference>
<dbReference type="AGR" id="MGI:2144877"/>
<dbReference type="CTD" id="55812"/>
<dbReference type="MGI" id="MGI:2144877">
    <property type="gene designation" value="Spata7"/>
</dbReference>
<dbReference type="VEuPathDB" id="HostDB:ENSMUSG00000021007"/>
<dbReference type="eggNOG" id="ENOG502QSVU">
    <property type="taxonomic scope" value="Eukaryota"/>
</dbReference>
<dbReference type="GeneTree" id="ENSGT00390000014113"/>
<dbReference type="InParanoid" id="Q80VP2"/>
<dbReference type="OMA" id="FITEHEW"/>
<dbReference type="OrthoDB" id="6263678at2759"/>
<dbReference type="PhylomeDB" id="Q80VP2"/>
<dbReference type="TreeFam" id="TF330591"/>
<dbReference type="BioGRID-ORCS" id="104871">
    <property type="hits" value="1 hit in 76 CRISPR screens"/>
</dbReference>
<dbReference type="ChiTaRS" id="Spata7">
    <property type="organism name" value="mouse"/>
</dbReference>
<dbReference type="PRO" id="PR:Q80VP2"/>
<dbReference type="Proteomes" id="UP000000589">
    <property type="component" value="Chromosome 12"/>
</dbReference>
<dbReference type="RNAct" id="Q80VP2">
    <property type="molecule type" value="protein"/>
</dbReference>
<dbReference type="Bgee" id="ENSMUSG00000021007">
    <property type="expression patterns" value="Expressed in spermatid and 181 other cell types or tissues"/>
</dbReference>
<dbReference type="ExpressionAtlas" id="Q80VP2">
    <property type="expression patterns" value="baseline and differential"/>
</dbReference>
<dbReference type="GO" id="GO:0005930">
    <property type="term" value="C:axoneme"/>
    <property type="evidence" value="ECO:0000250"/>
    <property type="project" value="UniProtKB"/>
</dbReference>
<dbReference type="GO" id="GO:0036064">
    <property type="term" value="C:ciliary basal body"/>
    <property type="evidence" value="ECO:0000250"/>
    <property type="project" value="UniProtKB"/>
</dbReference>
<dbReference type="GO" id="GO:0015630">
    <property type="term" value="C:microtubule cytoskeleton"/>
    <property type="evidence" value="ECO:0000250"/>
    <property type="project" value="UniProtKB"/>
</dbReference>
<dbReference type="GO" id="GO:0032391">
    <property type="term" value="C:photoreceptor connecting cilium"/>
    <property type="evidence" value="ECO:0000314"/>
    <property type="project" value="UniProtKB"/>
</dbReference>
<dbReference type="GO" id="GO:0120206">
    <property type="term" value="C:photoreceptor distal connecting cilium"/>
    <property type="evidence" value="ECO:0000314"/>
    <property type="project" value="MGI"/>
</dbReference>
<dbReference type="GO" id="GO:0120200">
    <property type="term" value="C:rod photoreceptor outer segment"/>
    <property type="evidence" value="ECO:0000315"/>
    <property type="project" value="MGI"/>
</dbReference>
<dbReference type="GO" id="GO:0000226">
    <property type="term" value="P:microtubule cytoskeleton organization"/>
    <property type="evidence" value="ECO:0000315"/>
    <property type="project" value="MGI"/>
</dbReference>
<dbReference type="GO" id="GO:0045494">
    <property type="term" value="P:photoreceptor cell maintenance"/>
    <property type="evidence" value="ECO:0000315"/>
    <property type="project" value="UniProtKB"/>
</dbReference>
<dbReference type="GO" id="GO:1903621">
    <property type="term" value="P:protein localization to photoreceptor connecting cilium"/>
    <property type="evidence" value="ECO:0000315"/>
    <property type="project" value="UniProtKB"/>
</dbReference>
<dbReference type="GO" id="GO:1903546">
    <property type="term" value="P:protein localization to photoreceptor outer segment"/>
    <property type="evidence" value="ECO:0000315"/>
    <property type="project" value="UniProtKB"/>
</dbReference>
<dbReference type="GO" id="GO:0007601">
    <property type="term" value="P:visual perception"/>
    <property type="evidence" value="ECO:0007669"/>
    <property type="project" value="UniProtKB-KW"/>
</dbReference>
<dbReference type="InterPro" id="IPR029357">
    <property type="entry name" value="SPATA7"/>
</dbReference>
<dbReference type="PANTHER" id="PTHR14917">
    <property type="entry name" value="SPERMATOGENESIS-ASSOCIATED PROTEIN 7"/>
    <property type="match status" value="1"/>
</dbReference>
<dbReference type="PANTHER" id="PTHR14917:SF2">
    <property type="entry name" value="SPERMATOGENESIS-ASSOCIATED PROTEIN 7"/>
    <property type="match status" value="1"/>
</dbReference>
<dbReference type="Pfam" id="PF15244">
    <property type="entry name" value="HSD3"/>
    <property type="match status" value="1"/>
</dbReference>
<feature type="chain" id="PRO_0000072105" description="Spermatogenesis-associated protein 7 homolog">
    <location>
        <begin position="1"/>
        <end position="582"/>
    </location>
</feature>
<feature type="region of interest" description="Disordered" evidence="2">
    <location>
        <begin position="167"/>
        <end position="192"/>
    </location>
</feature>
<feature type="region of interest" description="Disordered" evidence="2">
    <location>
        <begin position="251"/>
        <end position="289"/>
    </location>
</feature>
<feature type="compositionally biased region" description="Polar residues" evidence="2">
    <location>
        <begin position="169"/>
        <end position="181"/>
    </location>
</feature>
<feature type="compositionally biased region" description="Polar residues" evidence="2">
    <location>
        <begin position="262"/>
        <end position="274"/>
    </location>
</feature>
<keyword id="KW-0966">Cell projection</keyword>
<keyword id="KW-0963">Cytoplasm</keyword>
<keyword id="KW-0206">Cytoskeleton</keyword>
<keyword id="KW-1185">Reference proteome</keyword>
<keyword id="KW-0716">Sensory transduction</keyword>
<keyword id="KW-0844">Vision</keyword>
<evidence type="ECO:0000250" key="1">
    <source>
        <dbReference type="UniProtKB" id="Q9P0W8"/>
    </source>
</evidence>
<evidence type="ECO:0000256" key="2">
    <source>
        <dbReference type="SAM" id="MobiDB-lite"/>
    </source>
</evidence>
<evidence type="ECO:0000269" key="3">
    <source>
    </source>
</evidence>
<evidence type="ECO:0000269" key="4">
    <source>
    </source>
</evidence>
<evidence type="ECO:0000269" key="5">
    <source>
    </source>
</evidence>
<evidence type="ECO:0000269" key="6">
    <source>
    </source>
</evidence>
<evidence type="ECO:0000305" key="7"/>
<accession>Q80VP2</accession>
<accession>Q8BK23</accession>
<sequence>MDGSRRVRATSVLPRYSPPCLFTGHLSTKSNAFCTDSSSLRLSTLQLVKNHMAIHYNKILSAKAAVDCSIPVSVNTSIKYADQQRREKLRKELARCEKEFKLSKSAMQTNSKMNSKFFVNSLQKPSGEPQDQDVFIEEMTRYPSFSKSLIPSSEGLHLSLPESSKMLMSGTQKHASTSPSRHSGCGHGCDRRPRSAHQFQVALAKTPSGDLLEKHSDLFSNKQSPFTPRTLKTEAKSFLSQYRYYTPAKRRKDFSDQRMEAETQTELSSFNSELGTAEKTSSKDSEVNINQVPNYTRNGAEDKIAPLPSQGQNLAWDSIQDGILQQSSERASCKLSTEFSPDSKIYSDEEELLYLSFMENVTDEILKLGLFSNRFLERLFERHIKKNKHHLEEGKMRYLLHGLKVDLGCISEEDPAKQKHFRMLNQLHFQKALISRENEFVSDEETVSHHERQQYQEALDMLSAVPKDENKMFSLPGEFLIPAHKVKHSEGVIIQQVNDETDNEASPWNENNPSVSDSVIDQETSVDVIEGDSDFERAETSRELCCLSTSLSPSGPFPSINGGSNHGKELSTLRIMGMSIED</sequence>
<comment type="function">
    <text evidence="4 5 6">Involved in the maintenance of both rod and cone photoreceptor cells (PubMed:25398945, PubMed:29100828, PubMed:29899041). Required for photoreceptor-specific localization of proximal connecting cilium (CC) proteins RPGR, AHI1, NPHP1, NPHP4, and RPGRIP1 at the distal CC, a photoreceptor-specific extension of the primary cilium transition zone (PubMed:25398945, PubMed:29100828, PubMed:29899041). Maintenance of protein localization at the photoreceptor-specific distal CC is essential for normal microtubule stability and to prevent photoreceptor degeneration (PubMed:25398945, PubMed:29899041).</text>
</comment>
<comment type="subunit">
    <text evidence="1 4 6">Found in a complex with CFAP410, NEK1 and SPATA7 (By similarity). Interacts with NEK1 (By similarity). Interacts with RPGRIP1 (PubMed:25398945, PubMed:29899041). Interacts with RPGR (PubMed:29899041). Interacts with NPHP4 (PubMed:29899041). Interacts with NPHP1 (PubMed:29899041). Interacts with AHI1 (PubMed:29899041).</text>
</comment>
<comment type="subcellular location">
    <subcellularLocation>
        <location evidence="6">Cytoplasm</location>
        <location evidence="6">Cytoskeleton</location>
        <location evidence="6">Cilium axoneme</location>
    </subcellularLocation>
    <subcellularLocation>
        <location evidence="5 6">Cytoplasm</location>
        <location evidence="5 6">Cytoskeleton</location>
        <location evidence="5 6">Cilium basal body</location>
    </subcellularLocation>
    <subcellularLocation>
        <location evidence="1">Cytoplasm</location>
        <location evidence="1">Cytoskeleton</location>
    </subcellularLocation>
    <subcellularLocation>
        <location evidence="4 5 6">Cell projection</location>
        <location evidence="4 5 6">Cilium</location>
        <location evidence="4 5 6">Photoreceptor outer segment</location>
    </subcellularLocation>
    <text evidence="1">Localizes to the microtubule network.</text>
</comment>
<comment type="tissue specificity">
    <text evidence="3 4 5 6">Expressed in the retina (at protein level) (PubMed:19268277, PubMed:29100828, PubMed:29899041). Expressed in the choroid region and retinal pigment endothelium, within the photoreceptor layer (at protein level) (PubMed:25398945, PubMed:29100828, PubMed:29899041).</text>
</comment>
<comment type="disruption phenotype">
    <text evidence="4 5 6">Viable and fertile with no gross morphological abnormalities (PubMed:25398945). Knockout mice show severe early-onset retinal defects and progressive photoreceptor cell degeneration (PubMed:25398945). Significant and progressive reduction in response to light, accompanied by progressive thinning of the outer nuclear layer from P15 to 7 months, loss of Spata7-interacting proteins at the distal CC, and destabilization of the photoreceptor distal connecting cilium (CC) microtubule core (PubMed:25398945, PubMed:29899041). Impaired trafficking of photoreceptor proteins between the inner and outer nuclear segments resulting in loss of photoreceptor-specific protein localization at the distal CC (PubMed:25398945). Conditional knockdown of Spata7 in the retina shows an indistinguishable phenotype from knockout mice (PubMed:29100828). Electroretinogram (ERG) recordings show a significant and progressive reduction in response to light under scotopic (dark-adapted) and photopic (light-adapted) conditions (PubMed:29100828). Amplitude of both a-wave and b-wave responses is reduced indicating defects in both rod and cone type photoreceptors (PubMed:29100828).</text>
</comment>
<comment type="sequence caution" evidence="7">
    <conflict type="erroneous initiation">
        <sequence resource="EMBL-CDS" id="BAC36832"/>
    </conflict>
</comment>
<reference key="1">
    <citation type="journal article" date="2005" name="Science">
        <title>The transcriptional landscape of the mammalian genome.</title>
        <authorList>
            <person name="Carninci P."/>
            <person name="Kasukawa T."/>
            <person name="Katayama S."/>
            <person name="Gough J."/>
            <person name="Frith M.C."/>
            <person name="Maeda N."/>
            <person name="Oyama R."/>
            <person name="Ravasi T."/>
            <person name="Lenhard B."/>
            <person name="Wells C."/>
            <person name="Kodzius R."/>
            <person name="Shimokawa K."/>
            <person name="Bajic V.B."/>
            <person name="Brenner S.E."/>
            <person name="Batalov S."/>
            <person name="Forrest A.R."/>
            <person name="Zavolan M."/>
            <person name="Davis M.J."/>
            <person name="Wilming L.G."/>
            <person name="Aidinis V."/>
            <person name="Allen J.E."/>
            <person name="Ambesi-Impiombato A."/>
            <person name="Apweiler R."/>
            <person name="Aturaliya R.N."/>
            <person name="Bailey T.L."/>
            <person name="Bansal M."/>
            <person name="Baxter L."/>
            <person name="Beisel K.W."/>
            <person name="Bersano T."/>
            <person name="Bono H."/>
            <person name="Chalk A.M."/>
            <person name="Chiu K.P."/>
            <person name="Choudhary V."/>
            <person name="Christoffels A."/>
            <person name="Clutterbuck D.R."/>
            <person name="Crowe M.L."/>
            <person name="Dalla E."/>
            <person name="Dalrymple B.P."/>
            <person name="de Bono B."/>
            <person name="Della Gatta G."/>
            <person name="di Bernardo D."/>
            <person name="Down T."/>
            <person name="Engstrom P."/>
            <person name="Fagiolini M."/>
            <person name="Faulkner G."/>
            <person name="Fletcher C.F."/>
            <person name="Fukushima T."/>
            <person name="Furuno M."/>
            <person name="Futaki S."/>
            <person name="Gariboldi M."/>
            <person name="Georgii-Hemming P."/>
            <person name="Gingeras T.R."/>
            <person name="Gojobori T."/>
            <person name="Green R.E."/>
            <person name="Gustincich S."/>
            <person name="Harbers M."/>
            <person name="Hayashi Y."/>
            <person name="Hensch T.K."/>
            <person name="Hirokawa N."/>
            <person name="Hill D."/>
            <person name="Huminiecki L."/>
            <person name="Iacono M."/>
            <person name="Ikeo K."/>
            <person name="Iwama A."/>
            <person name="Ishikawa T."/>
            <person name="Jakt M."/>
            <person name="Kanapin A."/>
            <person name="Katoh M."/>
            <person name="Kawasawa Y."/>
            <person name="Kelso J."/>
            <person name="Kitamura H."/>
            <person name="Kitano H."/>
            <person name="Kollias G."/>
            <person name="Krishnan S.P."/>
            <person name="Kruger A."/>
            <person name="Kummerfeld S.K."/>
            <person name="Kurochkin I.V."/>
            <person name="Lareau L.F."/>
            <person name="Lazarevic D."/>
            <person name="Lipovich L."/>
            <person name="Liu J."/>
            <person name="Liuni S."/>
            <person name="McWilliam S."/>
            <person name="Madan Babu M."/>
            <person name="Madera M."/>
            <person name="Marchionni L."/>
            <person name="Matsuda H."/>
            <person name="Matsuzawa S."/>
            <person name="Miki H."/>
            <person name="Mignone F."/>
            <person name="Miyake S."/>
            <person name="Morris K."/>
            <person name="Mottagui-Tabar S."/>
            <person name="Mulder N."/>
            <person name="Nakano N."/>
            <person name="Nakauchi H."/>
            <person name="Ng P."/>
            <person name="Nilsson R."/>
            <person name="Nishiguchi S."/>
            <person name="Nishikawa S."/>
            <person name="Nori F."/>
            <person name="Ohara O."/>
            <person name="Okazaki Y."/>
            <person name="Orlando V."/>
            <person name="Pang K.C."/>
            <person name="Pavan W.J."/>
            <person name="Pavesi G."/>
            <person name="Pesole G."/>
            <person name="Petrovsky N."/>
            <person name="Piazza S."/>
            <person name="Reed J."/>
            <person name="Reid J.F."/>
            <person name="Ring B.Z."/>
            <person name="Ringwald M."/>
            <person name="Rost B."/>
            <person name="Ruan Y."/>
            <person name="Salzberg S.L."/>
            <person name="Sandelin A."/>
            <person name="Schneider C."/>
            <person name="Schoenbach C."/>
            <person name="Sekiguchi K."/>
            <person name="Semple C.A."/>
            <person name="Seno S."/>
            <person name="Sessa L."/>
            <person name="Sheng Y."/>
            <person name="Shibata Y."/>
            <person name="Shimada H."/>
            <person name="Shimada K."/>
            <person name="Silva D."/>
            <person name="Sinclair B."/>
            <person name="Sperling S."/>
            <person name="Stupka E."/>
            <person name="Sugiura K."/>
            <person name="Sultana R."/>
            <person name="Takenaka Y."/>
            <person name="Taki K."/>
            <person name="Tammoja K."/>
            <person name="Tan S.L."/>
            <person name="Tang S."/>
            <person name="Taylor M.S."/>
            <person name="Tegner J."/>
            <person name="Teichmann S.A."/>
            <person name="Ueda H.R."/>
            <person name="van Nimwegen E."/>
            <person name="Verardo R."/>
            <person name="Wei C.L."/>
            <person name="Yagi K."/>
            <person name="Yamanishi H."/>
            <person name="Zabarovsky E."/>
            <person name="Zhu S."/>
            <person name="Zimmer A."/>
            <person name="Hide W."/>
            <person name="Bult C."/>
            <person name="Grimmond S.M."/>
            <person name="Teasdale R.D."/>
            <person name="Liu E.T."/>
            <person name="Brusic V."/>
            <person name="Quackenbush J."/>
            <person name="Wahlestedt C."/>
            <person name="Mattick J.S."/>
            <person name="Hume D.A."/>
            <person name="Kai C."/>
            <person name="Sasaki D."/>
            <person name="Tomaru Y."/>
            <person name="Fukuda S."/>
            <person name="Kanamori-Katayama M."/>
            <person name="Suzuki M."/>
            <person name="Aoki J."/>
            <person name="Arakawa T."/>
            <person name="Iida J."/>
            <person name="Imamura K."/>
            <person name="Itoh M."/>
            <person name="Kato T."/>
            <person name="Kawaji H."/>
            <person name="Kawagashira N."/>
            <person name="Kawashima T."/>
            <person name="Kojima M."/>
            <person name="Kondo S."/>
            <person name="Konno H."/>
            <person name="Nakano K."/>
            <person name="Ninomiya N."/>
            <person name="Nishio T."/>
            <person name="Okada M."/>
            <person name="Plessy C."/>
            <person name="Shibata K."/>
            <person name="Shiraki T."/>
            <person name="Suzuki S."/>
            <person name="Tagami M."/>
            <person name="Waki K."/>
            <person name="Watahiki A."/>
            <person name="Okamura-Oho Y."/>
            <person name="Suzuki H."/>
            <person name="Kawai J."/>
            <person name="Hayashizaki Y."/>
        </authorList>
    </citation>
    <scope>NUCLEOTIDE SEQUENCE [LARGE SCALE MRNA]</scope>
    <source>
        <strain>C57BL/6J</strain>
        <tissue>Embryo</tissue>
    </source>
</reference>
<reference key="2">
    <citation type="journal article" date="2004" name="Genome Res.">
        <title>The status, quality, and expansion of the NIH full-length cDNA project: the Mammalian Gene Collection (MGC).</title>
        <authorList>
            <consortium name="The MGC Project Team"/>
        </authorList>
    </citation>
    <scope>NUCLEOTIDE SEQUENCE [LARGE SCALE MRNA]</scope>
    <source>
        <strain>C57BL/6J</strain>
        <tissue>Olfactory epithelium</tissue>
    </source>
</reference>
<reference key="3">
    <citation type="journal article" date="2009" name="Am. J. Hum. Genet.">
        <title>Mutations in SPATA7 cause Leber congenital amaurosis and juvenile retinitis pigmentosa.</title>
        <authorList>
            <person name="Wang H."/>
            <person name="den Hollander A.I."/>
            <person name="Moayedi Y."/>
            <person name="Abulimiti A."/>
            <person name="Li Y."/>
            <person name="Collin R.W.J."/>
            <person name="Hoyng C.B."/>
            <person name="Lopez I."/>
            <person name="Bray M."/>
            <person name="Lewis R.A."/>
            <person name="Lupski J.R."/>
            <person name="Mardon G."/>
            <person name="Koenekoop R.K."/>
            <person name="Chen R."/>
        </authorList>
    </citation>
    <scope>TISSUE SPECIFICITY</scope>
</reference>
<reference key="4">
    <citation type="journal article" date="2015" name="Hum. Mol. Genet.">
        <title>Spata7 is a retinal ciliopathy gene critical for correct RPGRIP1 localization and protein trafficking in the retina.</title>
        <authorList>
            <person name="Eblimit A."/>
            <person name="Nguyen T.M."/>
            <person name="Chen Y."/>
            <person name="Esteve-Rudd J."/>
            <person name="Zhong H."/>
            <person name="Letteboer S."/>
            <person name="van Reeuwijk J."/>
            <person name="Simons D.L."/>
            <person name="Ding Q."/>
            <person name="Wu K.M."/>
            <person name="Li Y."/>
            <person name="van Beersum S."/>
            <person name="Moayedi Y."/>
            <person name="Xu H."/>
            <person name="Pickard P."/>
            <person name="Wang K."/>
            <person name="Gan L."/>
            <person name="Wu S.M."/>
            <person name="Williams D.S."/>
            <person name="Mardon G."/>
            <person name="Roepman R."/>
            <person name="Chen R."/>
        </authorList>
    </citation>
    <scope>FUNCTION</scope>
    <scope>INTERACTION WITH RPGRIP1</scope>
    <scope>SUBCELLULAR LOCATION</scope>
    <scope>TISSUE SPECIFICITY</scope>
    <scope>DISRUPTION PHENOTYPE</scope>
</reference>
<reference key="5">
    <citation type="journal article" date="2018" name="Exp. Eye Res.">
        <title>Conditional loss of Spata7 in photoreceptors causes progressive retinal degeneration in mice.</title>
        <authorList>
            <person name="Eblimit A."/>
            <person name="Agrawal S.A."/>
            <person name="Thomas K."/>
            <person name="Anastassov I.A."/>
            <person name="Abulikemu T."/>
            <person name="Mardon G."/>
            <person name="Chen R."/>
        </authorList>
    </citation>
    <scope>FUNCTION</scope>
    <scope>SUBCELLULAR LOCATION</scope>
    <scope>TISSUE SPECIFICITY</scope>
    <scope>DISRUPTION PHENOTYPE</scope>
</reference>
<reference key="6">
    <citation type="journal article" date="2018" name="J. Cell Biol.">
        <title>SPATA7 maintains a novel photoreceptor-specific zone in the distal connecting cilium.</title>
        <authorList>
            <person name="Dharmat R."/>
            <person name="Eblimit A."/>
            <person name="Robichaux M.A."/>
            <person name="Zhang Z."/>
            <person name="Nguyen T.T."/>
            <person name="Jung S.Y."/>
            <person name="He F."/>
            <person name="Jain A."/>
            <person name="Li Y."/>
            <person name="Qin J."/>
            <person name="Overbeek P."/>
            <person name="Roepman R."/>
            <person name="Mardon G."/>
            <person name="Wensel T.G."/>
            <person name="Chen R."/>
        </authorList>
    </citation>
    <scope>FUNCTION</scope>
    <scope>INTERACTION WITH RPGR; RPGRIP1; NPHP4; NPHP1 AND AHI1</scope>
    <scope>SUBCELLULAR LOCATION</scope>
    <scope>TISSUE SPECIFICITY</scope>
    <scope>DISRUPTION PHENOTYPE</scope>
</reference>
<protein>
    <recommendedName>
        <fullName>Spermatogenesis-associated protein 7 homolog</fullName>
    </recommendedName>
</protein>
<organism>
    <name type="scientific">Mus musculus</name>
    <name type="common">Mouse</name>
    <dbReference type="NCBI Taxonomy" id="10090"/>
    <lineage>
        <taxon>Eukaryota</taxon>
        <taxon>Metazoa</taxon>
        <taxon>Chordata</taxon>
        <taxon>Craniata</taxon>
        <taxon>Vertebrata</taxon>
        <taxon>Euteleostomi</taxon>
        <taxon>Mammalia</taxon>
        <taxon>Eutheria</taxon>
        <taxon>Euarchontoglires</taxon>
        <taxon>Glires</taxon>
        <taxon>Rodentia</taxon>
        <taxon>Myomorpha</taxon>
        <taxon>Muroidea</taxon>
        <taxon>Muridae</taxon>
        <taxon>Murinae</taxon>
        <taxon>Mus</taxon>
        <taxon>Mus</taxon>
    </lineage>
</organism>
<gene>
    <name type="primary">Spata7</name>
</gene>
<name>SPAT7_MOUSE</name>